<gene>
    <name type="primary">ladA</name>
    <name type="synonym">xdhB</name>
</gene>
<keyword id="KW-0054">Arabinose catabolism</keyword>
<keyword id="KW-0119">Carbohydrate metabolism</keyword>
<keyword id="KW-0479">Metal-binding</keyword>
<keyword id="KW-0520">NAD</keyword>
<keyword id="KW-0547">Nucleotide-binding</keyword>
<keyword id="KW-0560">Oxidoreductase</keyword>
<keyword id="KW-0862">Zinc</keyword>
<feature type="chain" id="PRO_0000418406" description="L-arabinitol 4-dehydrogenase">
    <location>
        <begin position="1"/>
        <end position="382"/>
    </location>
</feature>
<feature type="binding site" evidence="1">
    <location>
        <position position="55"/>
    </location>
    <ligand>
        <name>Zn(2+)</name>
        <dbReference type="ChEBI" id="CHEBI:29105"/>
        <label>1</label>
        <note>catalytic</note>
    </ligand>
</feature>
<feature type="binding site" evidence="1">
    <location>
        <position position="80"/>
    </location>
    <ligand>
        <name>Zn(2+)</name>
        <dbReference type="ChEBI" id="CHEBI:29105"/>
        <label>1</label>
        <note>catalytic</note>
    </ligand>
</feature>
<feature type="binding site" evidence="1">
    <location>
        <position position="81"/>
    </location>
    <ligand>
        <name>Zn(2+)</name>
        <dbReference type="ChEBI" id="CHEBI:29105"/>
        <label>1</label>
        <note>catalytic</note>
    </ligand>
</feature>
<feature type="binding site" evidence="1">
    <location>
        <position position="110"/>
    </location>
    <ligand>
        <name>Zn(2+)</name>
        <dbReference type="ChEBI" id="CHEBI:29105"/>
        <label>2</label>
        <note>structural</note>
    </ligand>
</feature>
<feature type="binding site" evidence="1">
    <location>
        <position position="113"/>
    </location>
    <ligand>
        <name>Zn(2+)</name>
        <dbReference type="ChEBI" id="CHEBI:29105"/>
        <label>2</label>
        <note>structural</note>
    </ligand>
</feature>
<feature type="binding site" evidence="1">
    <location>
        <position position="116"/>
    </location>
    <ligand>
        <name>Zn(2+)</name>
        <dbReference type="ChEBI" id="CHEBI:29105"/>
        <label>2</label>
        <note>structural</note>
    </ligand>
</feature>
<feature type="binding site" evidence="1">
    <location>
        <position position="124"/>
    </location>
    <ligand>
        <name>Zn(2+)</name>
        <dbReference type="ChEBI" id="CHEBI:29105"/>
        <label>2</label>
        <note>structural</note>
    </ligand>
</feature>
<feature type="binding site" evidence="1">
    <location>
        <position position="165"/>
    </location>
    <ligand>
        <name>Zn(2+)</name>
        <dbReference type="ChEBI" id="CHEBI:29105"/>
        <label>1</label>
        <note>catalytic</note>
    </ligand>
</feature>
<feature type="binding site" evidence="1">
    <location>
        <begin position="192"/>
        <end position="193"/>
    </location>
    <ligand>
        <name>NAD(+)</name>
        <dbReference type="ChEBI" id="CHEBI:57540"/>
    </ligand>
</feature>
<feature type="binding site" evidence="1">
    <location>
        <position position="213"/>
    </location>
    <ligand>
        <name>NAD(+)</name>
        <dbReference type="ChEBI" id="CHEBI:57540"/>
    </ligand>
</feature>
<feature type="binding site" evidence="1">
    <location>
        <position position="218"/>
    </location>
    <ligand>
        <name>NAD(+)</name>
        <dbReference type="ChEBI" id="CHEBI:57540"/>
    </ligand>
</feature>
<feature type="binding site" evidence="1">
    <location>
        <position position="293"/>
    </location>
    <ligand>
        <name>NAD(+)</name>
        <dbReference type="ChEBI" id="CHEBI:57540"/>
    </ligand>
</feature>
<feature type="binding site" evidence="1">
    <location>
        <begin position="317"/>
        <end position="319"/>
    </location>
    <ligand>
        <name>NAD(+)</name>
        <dbReference type="ChEBI" id="CHEBI:57540"/>
    </ligand>
</feature>
<reference key="1">
    <citation type="journal article" date="2005" name="J. Biosci. Bioeng.">
        <title>Cloning and expression of NAD+-dependent L-arabinitol 4-dehydrogenase gene (ladA) of Aspergillus oryzae.</title>
        <authorList>
            <person name="Suzuki T."/>
            <person name="Tran L.H."/>
            <person name="Yogo M."/>
            <person name="Idota O."/>
            <person name="Kitamoto N."/>
            <person name="Kawai K."/>
            <person name="Takamizawa K."/>
        </authorList>
    </citation>
    <scope>NUCLEOTIDE SEQUENCE [GENOMIC DNA]</scope>
    <scope>FUNCTION</scope>
    <scope>CATALYTIC ACTIVITY</scope>
    <source>
        <strain>KBN616</strain>
    </source>
</reference>
<name>LAD_ASPOZ</name>
<sequence length="382" mass="40838">MATATVLEKANIGVYTNTNHDLWVAESKPTLEEVKSGESLKPGEVTVQVRSTGICGSDVHFWHAGCIGPMIVTGDHILGHESAGEVIAVASDVTHLKPGDRVAVEPNIPCHACEPCLTGRYNGCEKVLFLSTPPVDGLLRRYVNHPAVWCHKIGDMSYEDGALLEPLSVSLAAIERSGLRLGDPVLVTGAGPIGLITLLSARAAGATPIVITDIDEGRLAFAKSLVPDVITYKVQTNLSAEDNAAGIIDAFNDGQGSAPDALKPKLALECTGVESSVASAIWSVKFGGKVFVIGVGKNEMKIPFMRLSTQEIDLQYQYRYCNTWPRAIRLVRNGVISLKKLVTHRFLLEDALKAFETAADPKTGAIKVQIMSNEEDVKGASA</sequence>
<accession>Q763T4</accession>
<proteinExistence type="evidence at protein level"/>
<organism>
    <name type="scientific">Aspergillus oryzae</name>
    <name type="common">Yellow koji mold</name>
    <dbReference type="NCBI Taxonomy" id="5062"/>
    <lineage>
        <taxon>Eukaryota</taxon>
        <taxon>Fungi</taxon>
        <taxon>Dikarya</taxon>
        <taxon>Ascomycota</taxon>
        <taxon>Pezizomycotina</taxon>
        <taxon>Eurotiomycetes</taxon>
        <taxon>Eurotiomycetidae</taxon>
        <taxon>Eurotiales</taxon>
        <taxon>Aspergillaceae</taxon>
        <taxon>Aspergillus</taxon>
        <taxon>Aspergillus subgen. Circumdati</taxon>
    </lineage>
</organism>
<comment type="function">
    <text evidence="2">Catalyzes the NAD-dependent oxidation of L-arabinitol to L-xylulose in the fungal L-arabinose catabolic pathway. L-arabinose catabolism is important for using plant material as a carbon source. Also active on ribitol and xylitol. Not active with NADP as cosubstrate.</text>
</comment>
<comment type="catalytic activity">
    <reaction evidence="2">
        <text>L-arabinitol + NAD(+) = L-xylulose + NADH + H(+)</text>
        <dbReference type="Rhea" id="RHEA:16381"/>
        <dbReference type="ChEBI" id="CHEBI:15378"/>
        <dbReference type="ChEBI" id="CHEBI:17399"/>
        <dbReference type="ChEBI" id="CHEBI:18403"/>
        <dbReference type="ChEBI" id="CHEBI:57540"/>
        <dbReference type="ChEBI" id="CHEBI:57945"/>
        <dbReference type="EC" id="1.1.1.12"/>
    </reaction>
</comment>
<comment type="cofactor">
    <cofactor evidence="1">
        <name>Zn(2+)</name>
        <dbReference type="ChEBI" id="CHEBI:29105"/>
    </cofactor>
    <text evidence="1">Binds 2 Zn(2+) ions per subunit.</text>
</comment>
<comment type="pathway">
    <text>Carbohydrate degradation; L-arabinose degradation via L-arabinitol; D-xylulose 5-phosphate from L-arabinose (fungal route): step 2/5.</text>
</comment>
<comment type="subunit">
    <text evidence="1">Homotetramer.</text>
</comment>
<comment type="similarity">
    <text evidence="3">Belongs to the zinc-containing alcohol dehydrogenase family.</text>
</comment>
<protein>
    <recommendedName>
        <fullName>L-arabinitol 4-dehydrogenase</fullName>
        <shortName>LAD</shortName>
        <ecNumber>1.1.1.12</ecNumber>
    </recommendedName>
</protein>
<evidence type="ECO:0000250" key="1"/>
<evidence type="ECO:0000269" key="2">
    <source>
    </source>
</evidence>
<evidence type="ECO:0000305" key="3"/>
<dbReference type="EC" id="1.1.1.12"/>
<dbReference type="EMBL" id="AB116938">
    <property type="protein sequence ID" value="BAC81768.1"/>
    <property type="molecule type" value="Genomic_DNA"/>
</dbReference>
<dbReference type="SMR" id="Q763T4"/>
<dbReference type="EnsemblFungi" id="BAE56054">
    <property type="protein sequence ID" value="BAE56054"/>
    <property type="gene ID" value="AO090005001078"/>
</dbReference>
<dbReference type="VEuPathDB" id="FungiDB:AO090005001078"/>
<dbReference type="eggNOG" id="KOG0024">
    <property type="taxonomic scope" value="Eukaryota"/>
</dbReference>
<dbReference type="OMA" id="MRVAMYY"/>
<dbReference type="BRENDA" id="1.1.1.12">
    <property type="organism ID" value="522"/>
</dbReference>
<dbReference type="UniPathway" id="UPA00146">
    <property type="reaction ID" value="UER00575"/>
</dbReference>
<dbReference type="GO" id="GO:0050019">
    <property type="term" value="F:L-arabinitol 4-dehydrogenase activity"/>
    <property type="evidence" value="ECO:0007669"/>
    <property type="project" value="UniProtKB-EC"/>
</dbReference>
<dbReference type="GO" id="GO:0003939">
    <property type="term" value="F:L-iditol 2-dehydrogenase (NAD+) activity"/>
    <property type="evidence" value="ECO:0007669"/>
    <property type="project" value="TreeGrafter"/>
</dbReference>
<dbReference type="GO" id="GO:0000166">
    <property type="term" value="F:nucleotide binding"/>
    <property type="evidence" value="ECO:0007669"/>
    <property type="project" value="UniProtKB-KW"/>
</dbReference>
<dbReference type="GO" id="GO:0016491">
    <property type="term" value="F:oxidoreductase activity"/>
    <property type="evidence" value="ECO:0000314"/>
    <property type="project" value="AspGD"/>
</dbReference>
<dbReference type="GO" id="GO:0008270">
    <property type="term" value="F:zinc ion binding"/>
    <property type="evidence" value="ECO:0007669"/>
    <property type="project" value="InterPro"/>
</dbReference>
<dbReference type="GO" id="GO:0019569">
    <property type="term" value="P:L-arabinose catabolic process to xylulose 5-phosphate"/>
    <property type="evidence" value="ECO:0007669"/>
    <property type="project" value="UniProtKB-UniPathway"/>
</dbReference>
<dbReference type="GO" id="GO:0019697">
    <property type="term" value="P:L-xylitol catabolic process to xylulose 5-phosphate"/>
    <property type="evidence" value="ECO:0000315"/>
    <property type="project" value="AspGD"/>
</dbReference>
<dbReference type="GO" id="GO:0006062">
    <property type="term" value="P:sorbitol catabolic process"/>
    <property type="evidence" value="ECO:0007669"/>
    <property type="project" value="TreeGrafter"/>
</dbReference>
<dbReference type="CDD" id="cd05285">
    <property type="entry name" value="sorbitol_DH"/>
    <property type="match status" value="1"/>
</dbReference>
<dbReference type="FunFam" id="3.40.50.720:FF:000068">
    <property type="entry name" value="Sorbitol dehydrogenase"/>
    <property type="match status" value="1"/>
</dbReference>
<dbReference type="Gene3D" id="3.90.180.10">
    <property type="entry name" value="Medium-chain alcohol dehydrogenases, catalytic domain"/>
    <property type="match status" value="1"/>
</dbReference>
<dbReference type="Gene3D" id="3.40.50.720">
    <property type="entry name" value="NAD(P)-binding Rossmann-like Domain"/>
    <property type="match status" value="1"/>
</dbReference>
<dbReference type="InterPro" id="IPR013149">
    <property type="entry name" value="ADH-like_C"/>
</dbReference>
<dbReference type="InterPro" id="IPR013154">
    <property type="entry name" value="ADH-like_N"/>
</dbReference>
<dbReference type="InterPro" id="IPR002328">
    <property type="entry name" value="ADH_Zn_CS"/>
</dbReference>
<dbReference type="InterPro" id="IPR011032">
    <property type="entry name" value="GroES-like_sf"/>
</dbReference>
<dbReference type="InterPro" id="IPR036291">
    <property type="entry name" value="NAD(P)-bd_dom_sf"/>
</dbReference>
<dbReference type="InterPro" id="IPR045306">
    <property type="entry name" value="SDH-like"/>
</dbReference>
<dbReference type="PANTHER" id="PTHR43161:SF12">
    <property type="entry name" value="L-ARABINITOL 4-DEHYDROGENASE"/>
    <property type="match status" value="1"/>
</dbReference>
<dbReference type="PANTHER" id="PTHR43161">
    <property type="entry name" value="SORBITOL DEHYDROGENASE"/>
    <property type="match status" value="1"/>
</dbReference>
<dbReference type="Pfam" id="PF08240">
    <property type="entry name" value="ADH_N"/>
    <property type="match status" value="1"/>
</dbReference>
<dbReference type="Pfam" id="PF00107">
    <property type="entry name" value="ADH_zinc_N"/>
    <property type="match status" value="1"/>
</dbReference>
<dbReference type="SUPFAM" id="SSF50129">
    <property type="entry name" value="GroES-like"/>
    <property type="match status" value="1"/>
</dbReference>
<dbReference type="SUPFAM" id="SSF51735">
    <property type="entry name" value="NAD(P)-binding Rossmann-fold domains"/>
    <property type="match status" value="1"/>
</dbReference>
<dbReference type="PROSITE" id="PS00059">
    <property type="entry name" value="ADH_ZINC"/>
    <property type="match status" value="1"/>
</dbReference>